<protein>
    <recommendedName>
        <fullName>Dihydrolipoyl dehydrogenase 2</fullName>
        <ecNumber>1.8.1.4</ecNumber>
    </recommendedName>
    <alternativeName>
        <fullName>Dihydrolipoamide dehydrogenase 2</fullName>
    </alternativeName>
</protein>
<comment type="catalytic activity">
    <reaction>
        <text>N(6)-[(R)-dihydrolipoyl]-L-lysyl-[protein] + NAD(+) = N(6)-[(R)-lipoyl]-L-lysyl-[protein] + NADH + H(+)</text>
        <dbReference type="Rhea" id="RHEA:15045"/>
        <dbReference type="Rhea" id="RHEA-COMP:10474"/>
        <dbReference type="Rhea" id="RHEA-COMP:10475"/>
        <dbReference type="ChEBI" id="CHEBI:15378"/>
        <dbReference type="ChEBI" id="CHEBI:57540"/>
        <dbReference type="ChEBI" id="CHEBI:57945"/>
        <dbReference type="ChEBI" id="CHEBI:83099"/>
        <dbReference type="ChEBI" id="CHEBI:83100"/>
        <dbReference type="EC" id="1.8.1.4"/>
    </reaction>
</comment>
<comment type="cofactor">
    <cofactor evidence="1">
        <name>FAD</name>
        <dbReference type="ChEBI" id="CHEBI:57692"/>
    </cofactor>
    <text evidence="1">Binds 1 FAD per subunit.</text>
</comment>
<comment type="subunit">
    <text evidence="1">Homodimer.</text>
</comment>
<comment type="subcellular location">
    <subcellularLocation>
        <location evidence="1">Cytoplasm</location>
    </subcellularLocation>
</comment>
<comment type="miscellaneous">
    <text evidence="1">The active site is a redox-active disulfide bond.</text>
</comment>
<comment type="similarity">
    <text evidence="2">Belongs to the class-I pyridine nucleotide-disulfide oxidoreductase family.</text>
</comment>
<reference key="1">
    <citation type="journal article" date="2004" name="Genome Res.">
        <title>Genome sequence of Haloarcula marismortui: a halophilic archaeon from the Dead Sea.</title>
        <authorList>
            <person name="Baliga N.S."/>
            <person name="Bonneau R."/>
            <person name="Facciotti M.T."/>
            <person name="Pan M."/>
            <person name="Glusman G."/>
            <person name="Deutsch E.W."/>
            <person name="Shannon P."/>
            <person name="Chiu Y."/>
            <person name="Weng R.S."/>
            <person name="Gan R.R."/>
            <person name="Hung P."/>
            <person name="Date S.V."/>
            <person name="Marcotte E."/>
            <person name="Hood L."/>
            <person name="Ng W.V."/>
        </authorList>
    </citation>
    <scope>NUCLEOTIDE SEQUENCE [LARGE SCALE GENOMIC DNA]</scope>
    <source>
        <strain>ATCC 43049 / DSM 3752 / JCM 8966 / VKM B-1809</strain>
    </source>
</reference>
<feature type="chain" id="PRO_0000068055" description="Dihydrolipoyl dehydrogenase 2">
    <location>
        <begin position="1"/>
        <end position="472"/>
    </location>
</feature>
<feature type="active site" description="Proton acceptor" evidence="1">
    <location>
        <position position="450"/>
    </location>
</feature>
<feature type="binding site" evidence="1">
    <location>
        <begin position="39"/>
        <end position="47"/>
    </location>
    <ligand>
        <name>FAD</name>
        <dbReference type="ChEBI" id="CHEBI:57692"/>
    </ligand>
</feature>
<feature type="binding site" evidence="1">
    <location>
        <position position="56"/>
    </location>
    <ligand>
        <name>FAD</name>
        <dbReference type="ChEBI" id="CHEBI:57692"/>
    </ligand>
</feature>
<feature type="binding site" evidence="1">
    <location>
        <position position="118"/>
    </location>
    <ligand>
        <name>FAD</name>
        <dbReference type="ChEBI" id="CHEBI:57692"/>
    </ligand>
</feature>
<feature type="binding site" evidence="1">
    <location>
        <begin position="186"/>
        <end position="190"/>
    </location>
    <ligand>
        <name>NAD(+)</name>
        <dbReference type="ChEBI" id="CHEBI:57540"/>
    </ligand>
</feature>
<feature type="binding site" evidence="1">
    <location>
        <position position="209"/>
    </location>
    <ligand>
        <name>NAD(+)</name>
        <dbReference type="ChEBI" id="CHEBI:57540"/>
    </ligand>
</feature>
<feature type="binding site" evidence="1">
    <location>
        <begin position="275"/>
        <end position="278"/>
    </location>
    <ligand>
        <name>NAD(+)</name>
        <dbReference type="ChEBI" id="CHEBI:57540"/>
    </ligand>
</feature>
<feature type="binding site" evidence="1">
    <location>
        <position position="318"/>
    </location>
    <ligand>
        <name>FAD</name>
        <dbReference type="ChEBI" id="CHEBI:57692"/>
    </ligand>
</feature>
<feature type="binding site" evidence="1">
    <location>
        <position position="326"/>
    </location>
    <ligand>
        <name>FAD</name>
        <dbReference type="ChEBI" id="CHEBI:57692"/>
    </ligand>
</feature>
<feature type="disulfide bond" description="Redox-active" evidence="1">
    <location>
        <begin position="47"/>
        <end position="52"/>
    </location>
</feature>
<proteinExistence type="inferred from homology"/>
<keyword id="KW-0963">Cytoplasm</keyword>
<keyword id="KW-1015">Disulfide bond</keyword>
<keyword id="KW-0274">FAD</keyword>
<keyword id="KW-0285">Flavoprotein</keyword>
<keyword id="KW-0520">NAD</keyword>
<keyword id="KW-0560">Oxidoreductase</keyword>
<keyword id="KW-0676">Redox-active center</keyword>
<keyword id="KW-1185">Reference proteome</keyword>
<organism>
    <name type="scientific">Haloarcula marismortui (strain ATCC 43049 / DSM 3752 / JCM 8966 / VKM B-1809)</name>
    <name type="common">Halobacterium marismortui</name>
    <dbReference type="NCBI Taxonomy" id="272569"/>
    <lineage>
        <taxon>Archaea</taxon>
        <taxon>Methanobacteriati</taxon>
        <taxon>Methanobacteriota</taxon>
        <taxon>Stenosarchaea group</taxon>
        <taxon>Halobacteria</taxon>
        <taxon>Halobacteriales</taxon>
        <taxon>Haloarculaceae</taxon>
        <taxon>Haloarcula</taxon>
    </lineage>
</organism>
<accession>Q5UYG6</accession>
<gene>
    <name type="primary">lpdA2</name>
    <name type="ordered locus">rrnAC2953</name>
</gene>
<evidence type="ECO:0000250" key="1"/>
<evidence type="ECO:0000305" key="2"/>
<name>DLDH2_HALMA</name>
<sequence>MVVGDVTTGTELLVIGGGPGGYVAAIRGAQLGLDTTLVERDAYGGTCLNHGCIPSKALISASDVAHDARQAESMGVFADPAVDMAGMTEWKDGVVTRLTRGVESLCKNAGVNLVEGTAEFVDDGTVRVAHGGEGQGSESLSFEHAIVATGSRPMAVPGFEFDGEHILSSKDALALESVPEKLLVVGAGYIGMELSTVFAKLGAEVTVVEMLDDVLPGYEDDIATVVRDRAEELGIDFNFGEAADNWEETDEGIRVQTVDEDEVVTEYNAEKCLVAVGREPVTDTLALDNIDLQTDENGVIPTDDQCRTAFESVFAVGDVAGEPMLAHKAMAEGEVAARAAAGEPAAFDHQAIPAAVFTDPEIATVGMTESEAEAAGFEPVIGQMPVRANGRALTVNEKEGFVRVVADADEEFLLGAQIVGPEASELIAELGLGIEMGARLEDIAGTIHTHPTLSEAVHEAAAAARGEAVHTR</sequence>
<dbReference type="EC" id="1.8.1.4"/>
<dbReference type="EMBL" id="AY596297">
    <property type="protein sequence ID" value="AAV47687.1"/>
    <property type="molecule type" value="Genomic_DNA"/>
</dbReference>
<dbReference type="RefSeq" id="WP_011224529.1">
    <property type="nucleotide sequence ID" value="NC_006396.1"/>
</dbReference>
<dbReference type="SMR" id="Q5UYG6"/>
<dbReference type="STRING" id="272569.rrnAC2953"/>
<dbReference type="PaxDb" id="272569-rrnAC2953"/>
<dbReference type="EnsemblBacteria" id="AAV47687">
    <property type="protein sequence ID" value="AAV47687"/>
    <property type="gene ID" value="rrnAC2953"/>
</dbReference>
<dbReference type="GeneID" id="40153781"/>
<dbReference type="KEGG" id="hma:rrnAC2953"/>
<dbReference type="PATRIC" id="fig|272569.17.peg.3512"/>
<dbReference type="eggNOG" id="arCOG01068">
    <property type="taxonomic scope" value="Archaea"/>
</dbReference>
<dbReference type="HOGENOM" id="CLU_016755_0_3_2"/>
<dbReference type="Proteomes" id="UP000001169">
    <property type="component" value="Chromosome I"/>
</dbReference>
<dbReference type="GO" id="GO:0005737">
    <property type="term" value="C:cytoplasm"/>
    <property type="evidence" value="ECO:0007669"/>
    <property type="project" value="UniProtKB-SubCell"/>
</dbReference>
<dbReference type="GO" id="GO:0004148">
    <property type="term" value="F:dihydrolipoyl dehydrogenase (NADH) activity"/>
    <property type="evidence" value="ECO:0007669"/>
    <property type="project" value="UniProtKB-EC"/>
</dbReference>
<dbReference type="GO" id="GO:0050660">
    <property type="term" value="F:flavin adenine dinucleotide binding"/>
    <property type="evidence" value="ECO:0007669"/>
    <property type="project" value="InterPro"/>
</dbReference>
<dbReference type="GO" id="GO:0006103">
    <property type="term" value="P:2-oxoglutarate metabolic process"/>
    <property type="evidence" value="ECO:0007669"/>
    <property type="project" value="TreeGrafter"/>
</dbReference>
<dbReference type="FunFam" id="3.30.390.30:FF:000001">
    <property type="entry name" value="Dihydrolipoyl dehydrogenase"/>
    <property type="match status" value="1"/>
</dbReference>
<dbReference type="Gene3D" id="3.30.390.30">
    <property type="match status" value="1"/>
</dbReference>
<dbReference type="Gene3D" id="3.50.50.60">
    <property type="entry name" value="FAD/NAD(P)-binding domain"/>
    <property type="match status" value="2"/>
</dbReference>
<dbReference type="InterPro" id="IPR050151">
    <property type="entry name" value="Class-I_Pyr_Nuc-Dis_Oxidored"/>
</dbReference>
<dbReference type="InterPro" id="IPR036188">
    <property type="entry name" value="FAD/NAD-bd_sf"/>
</dbReference>
<dbReference type="InterPro" id="IPR023753">
    <property type="entry name" value="FAD/NAD-binding_dom"/>
</dbReference>
<dbReference type="InterPro" id="IPR016156">
    <property type="entry name" value="FAD/NAD-linked_Rdtase_dimer_sf"/>
</dbReference>
<dbReference type="InterPro" id="IPR006258">
    <property type="entry name" value="Lipoamide_DH"/>
</dbReference>
<dbReference type="InterPro" id="IPR001100">
    <property type="entry name" value="Pyr_nuc-diS_OxRdtase"/>
</dbReference>
<dbReference type="InterPro" id="IPR004099">
    <property type="entry name" value="Pyr_nucl-diS_OxRdtase_dimer"/>
</dbReference>
<dbReference type="InterPro" id="IPR012999">
    <property type="entry name" value="Pyr_OxRdtase_I_AS"/>
</dbReference>
<dbReference type="NCBIfam" id="TIGR01350">
    <property type="entry name" value="lipoamide_DH"/>
    <property type="match status" value="1"/>
</dbReference>
<dbReference type="PANTHER" id="PTHR22912:SF160">
    <property type="entry name" value="DIHYDROLIPOYL DEHYDROGENASE"/>
    <property type="match status" value="1"/>
</dbReference>
<dbReference type="PANTHER" id="PTHR22912">
    <property type="entry name" value="DISULFIDE OXIDOREDUCTASE"/>
    <property type="match status" value="1"/>
</dbReference>
<dbReference type="Pfam" id="PF07992">
    <property type="entry name" value="Pyr_redox_2"/>
    <property type="match status" value="1"/>
</dbReference>
<dbReference type="Pfam" id="PF02852">
    <property type="entry name" value="Pyr_redox_dim"/>
    <property type="match status" value="1"/>
</dbReference>
<dbReference type="PIRSF" id="PIRSF000350">
    <property type="entry name" value="Mercury_reductase_MerA"/>
    <property type="match status" value="1"/>
</dbReference>
<dbReference type="PRINTS" id="PR00368">
    <property type="entry name" value="FADPNR"/>
</dbReference>
<dbReference type="PRINTS" id="PR00411">
    <property type="entry name" value="PNDRDTASEI"/>
</dbReference>
<dbReference type="SUPFAM" id="SSF51905">
    <property type="entry name" value="FAD/NAD(P)-binding domain"/>
    <property type="match status" value="1"/>
</dbReference>
<dbReference type="SUPFAM" id="SSF55424">
    <property type="entry name" value="FAD/NAD-linked reductases, dimerisation (C-terminal) domain"/>
    <property type="match status" value="1"/>
</dbReference>
<dbReference type="PROSITE" id="PS00076">
    <property type="entry name" value="PYRIDINE_REDOX_1"/>
    <property type="match status" value="1"/>
</dbReference>